<protein>
    <recommendedName>
        <fullName>Protein PER1 homolog</fullName>
    </recommendedName>
</protein>
<accession>Q9P6N9</accession>
<name>PER1_SCHPO</name>
<evidence type="ECO:0000250" key="1"/>
<evidence type="ECO:0000255" key="2"/>
<evidence type="ECO:0000269" key="3">
    <source>
    </source>
</evidence>
<evidence type="ECO:0000305" key="4"/>
<gene>
    <name type="ORF">SPAC823.07</name>
</gene>
<dbReference type="EMBL" id="CU329670">
    <property type="protein sequence ID" value="CAB90152.1"/>
    <property type="molecule type" value="Genomic_DNA"/>
</dbReference>
<dbReference type="BioGRID" id="280078">
    <property type="interactions" value="3"/>
</dbReference>
<dbReference type="FunCoup" id="Q9P6N9">
    <property type="interactions" value="77"/>
</dbReference>
<dbReference type="STRING" id="284812.Q9P6N9"/>
<dbReference type="iPTMnet" id="Q9P6N9"/>
<dbReference type="PaxDb" id="4896-SPAC823.07.1"/>
<dbReference type="EnsemblFungi" id="SPAC823.07.1">
    <property type="protein sequence ID" value="SPAC823.07.1:pep"/>
    <property type="gene ID" value="SPAC823.07"/>
</dbReference>
<dbReference type="KEGG" id="spo:2543664"/>
<dbReference type="PomBase" id="SPAC823.07"/>
<dbReference type="VEuPathDB" id="FungiDB:SPAC823.07"/>
<dbReference type="eggNOG" id="KOG2970">
    <property type="taxonomic scope" value="Eukaryota"/>
</dbReference>
<dbReference type="HOGENOM" id="CLU_032917_1_1_1"/>
<dbReference type="InParanoid" id="Q9P6N9"/>
<dbReference type="OMA" id="DFMIEDC"/>
<dbReference type="PhylomeDB" id="Q9P6N9"/>
<dbReference type="PRO" id="PR:Q9P6N9"/>
<dbReference type="Proteomes" id="UP000002485">
    <property type="component" value="Chromosome I"/>
</dbReference>
<dbReference type="GO" id="GO:0005789">
    <property type="term" value="C:endoplasmic reticulum membrane"/>
    <property type="evidence" value="ECO:0000318"/>
    <property type="project" value="GO_Central"/>
</dbReference>
<dbReference type="GO" id="GO:0000329">
    <property type="term" value="C:fungal-type vacuole membrane"/>
    <property type="evidence" value="ECO:0007005"/>
    <property type="project" value="PomBase"/>
</dbReference>
<dbReference type="GO" id="GO:0016788">
    <property type="term" value="F:hydrolase activity, acting on ester bonds"/>
    <property type="evidence" value="ECO:0000318"/>
    <property type="project" value="GO_Central"/>
</dbReference>
<dbReference type="GO" id="GO:0006506">
    <property type="term" value="P:GPI anchor biosynthetic process"/>
    <property type="evidence" value="ECO:0000318"/>
    <property type="project" value="GO_Central"/>
</dbReference>
<dbReference type="InterPro" id="IPR007217">
    <property type="entry name" value="Per1-like"/>
</dbReference>
<dbReference type="PANTHER" id="PTHR13148">
    <property type="entry name" value="PER1-RELATED"/>
    <property type="match status" value="1"/>
</dbReference>
<dbReference type="PANTHER" id="PTHR13148:SF0">
    <property type="entry name" value="POST-GPI ATTACHMENT TO PROTEINS FACTOR 3"/>
    <property type="match status" value="1"/>
</dbReference>
<dbReference type="Pfam" id="PF04080">
    <property type="entry name" value="Per1"/>
    <property type="match status" value="1"/>
</dbReference>
<comment type="function">
    <text evidence="1">Involved in the lipid remodeling steps of GPI-anchor maturation. Lipid remodeling steps consist in the generation of 2 saturated fatty chains at the sn-2 position of GPI-anchors proteins. Required for phospholipase A2 activity that removes an acyl-chain at the sn-2 position of GPI-anchors during the remodeling of GPI. Required for efficient transport of GPI-anchor proteins (By similarity).</text>
</comment>
<comment type="subcellular location">
    <subcellularLocation>
        <location evidence="3">Endoplasmic reticulum membrane</location>
        <topology evidence="3">Multi-pass membrane protein</topology>
    </subcellularLocation>
    <subcellularLocation>
        <location evidence="3">Vacuole membrane</location>
        <topology evidence="3">Multi-pass membrane protein</topology>
    </subcellularLocation>
</comment>
<comment type="similarity">
    <text evidence="4">Belongs to the PGAP3/PER1 family.</text>
</comment>
<sequence length="331" mass="38356">MRVLRNFTIFFLFTALSLFRQISASAGDLHPVYVSCVNRCIENKCHGNPSDTSKLPLDLKLFRWDCGSNCGYECEITAENYFAAHNLPSQQYHGKWYFIRVFGIQELFSVFFSMLNFMIHYNGYHIMRRCIPDEHPAKRLCLSWAIVGMNAWVWSSVFHIRDTPITEKLDYFSAGAFVLFGSYCTLILMLRLDQLPGGKLLCWIIGVIFIAAFIAHVSYLSFYSFDYGYNMKANVAVGLVQNILWYYYSWSNRNSGLYWTRWPAYIVTSLMLATSLELFDFSPIANLIDAHALWHLSTVPITHYLYGFVVRKCSYDLTKGTFKIKAYDSSR</sequence>
<proteinExistence type="inferred from homology"/>
<reference key="1">
    <citation type="journal article" date="2002" name="Nature">
        <title>The genome sequence of Schizosaccharomyces pombe.</title>
        <authorList>
            <person name="Wood V."/>
            <person name="Gwilliam R."/>
            <person name="Rajandream M.A."/>
            <person name="Lyne M.H."/>
            <person name="Lyne R."/>
            <person name="Stewart A."/>
            <person name="Sgouros J.G."/>
            <person name="Peat N."/>
            <person name="Hayles J."/>
            <person name="Baker S.G."/>
            <person name="Basham D."/>
            <person name="Bowman S."/>
            <person name="Brooks K."/>
            <person name="Brown D."/>
            <person name="Brown S."/>
            <person name="Chillingworth T."/>
            <person name="Churcher C.M."/>
            <person name="Collins M."/>
            <person name="Connor R."/>
            <person name="Cronin A."/>
            <person name="Davis P."/>
            <person name="Feltwell T."/>
            <person name="Fraser A."/>
            <person name="Gentles S."/>
            <person name="Goble A."/>
            <person name="Hamlin N."/>
            <person name="Harris D.E."/>
            <person name="Hidalgo J."/>
            <person name="Hodgson G."/>
            <person name="Holroyd S."/>
            <person name="Hornsby T."/>
            <person name="Howarth S."/>
            <person name="Huckle E.J."/>
            <person name="Hunt S."/>
            <person name="Jagels K."/>
            <person name="James K.D."/>
            <person name="Jones L."/>
            <person name="Jones M."/>
            <person name="Leather S."/>
            <person name="McDonald S."/>
            <person name="McLean J."/>
            <person name="Mooney P."/>
            <person name="Moule S."/>
            <person name="Mungall K.L."/>
            <person name="Murphy L.D."/>
            <person name="Niblett D."/>
            <person name="Odell C."/>
            <person name="Oliver K."/>
            <person name="O'Neil S."/>
            <person name="Pearson D."/>
            <person name="Quail M.A."/>
            <person name="Rabbinowitsch E."/>
            <person name="Rutherford K.M."/>
            <person name="Rutter S."/>
            <person name="Saunders D."/>
            <person name="Seeger K."/>
            <person name="Sharp S."/>
            <person name="Skelton J."/>
            <person name="Simmonds M.N."/>
            <person name="Squares R."/>
            <person name="Squares S."/>
            <person name="Stevens K."/>
            <person name="Taylor K."/>
            <person name="Taylor R.G."/>
            <person name="Tivey A."/>
            <person name="Walsh S.V."/>
            <person name="Warren T."/>
            <person name="Whitehead S."/>
            <person name="Woodward J.R."/>
            <person name="Volckaert G."/>
            <person name="Aert R."/>
            <person name="Robben J."/>
            <person name="Grymonprez B."/>
            <person name="Weltjens I."/>
            <person name="Vanstreels E."/>
            <person name="Rieger M."/>
            <person name="Schaefer M."/>
            <person name="Mueller-Auer S."/>
            <person name="Gabel C."/>
            <person name="Fuchs M."/>
            <person name="Duesterhoeft A."/>
            <person name="Fritzc C."/>
            <person name="Holzer E."/>
            <person name="Moestl D."/>
            <person name="Hilbert H."/>
            <person name="Borzym K."/>
            <person name="Langer I."/>
            <person name="Beck A."/>
            <person name="Lehrach H."/>
            <person name="Reinhardt R."/>
            <person name="Pohl T.M."/>
            <person name="Eger P."/>
            <person name="Zimmermann W."/>
            <person name="Wedler H."/>
            <person name="Wambutt R."/>
            <person name="Purnelle B."/>
            <person name="Goffeau A."/>
            <person name="Cadieu E."/>
            <person name="Dreano S."/>
            <person name="Gloux S."/>
            <person name="Lelaure V."/>
            <person name="Mottier S."/>
            <person name="Galibert F."/>
            <person name="Aves S.J."/>
            <person name="Xiang Z."/>
            <person name="Hunt C."/>
            <person name="Moore K."/>
            <person name="Hurst S.M."/>
            <person name="Lucas M."/>
            <person name="Rochet M."/>
            <person name="Gaillardin C."/>
            <person name="Tallada V.A."/>
            <person name="Garzon A."/>
            <person name="Thode G."/>
            <person name="Daga R.R."/>
            <person name="Cruzado L."/>
            <person name="Jimenez J."/>
            <person name="Sanchez M."/>
            <person name="del Rey F."/>
            <person name="Benito J."/>
            <person name="Dominguez A."/>
            <person name="Revuelta J.L."/>
            <person name="Moreno S."/>
            <person name="Armstrong J."/>
            <person name="Forsburg S.L."/>
            <person name="Cerutti L."/>
            <person name="Lowe T."/>
            <person name="McCombie W.R."/>
            <person name="Paulsen I."/>
            <person name="Potashkin J."/>
            <person name="Shpakovski G.V."/>
            <person name="Ussery D."/>
            <person name="Barrell B.G."/>
            <person name="Nurse P."/>
        </authorList>
    </citation>
    <scope>NUCLEOTIDE SEQUENCE [LARGE SCALE GENOMIC DNA]</scope>
    <source>
        <strain>972 / ATCC 24843</strain>
    </source>
</reference>
<reference key="2">
    <citation type="journal article" date="2006" name="Nat. Biotechnol.">
        <title>ORFeome cloning and global analysis of protein localization in the fission yeast Schizosaccharomyces pombe.</title>
        <authorList>
            <person name="Matsuyama A."/>
            <person name="Arai R."/>
            <person name="Yashiroda Y."/>
            <person name="Shirai A."/>
            <person name="Kamata A."/>
            <person name="Sekido S."/>
            <person name="Kobayashi Y."/>
            <person name="Hashimoto A."/>
            <person name="Hamamoto M."/>
            <person name="Hiraoka Y."/>
            <person name="Horinouchi S."/>
            <person name="Yoshida M."/>
        </authorList>
    </citation>
    <scope>SUBCELLULAR LOCATION [LARGE SCALE ANALYSIS]</scope>
</reference>
<keyword id="KW-0256">Endoplasmic reticulum</keyword>
<keyword id="KW-0337">GPI-anchor biosynthesis</keyword>
<keyword id="KW-0472">Membrane</keyword>
<keyword id="KW-1185">Reference proteome</keyword>
<keyword id="KW-0732">Signal</keyword>
<keyword id="KW-0812">Transmembrane</keyword>
<keyword id="KW-1133">Transmembrane helix</keyword>
<keyword id="KW-0926">Vacuole</keyword>
<organism>
    <name type="scientific">Schizosaccharomyces pombe (strain 972 / ATCC 24843)</name>
    <name type="common">Fission yeast</name>
    <dbReference type="NCBI Taxonomy" id="284812"/>
    <lineage>
        <taxon>Eukaryota</taxon>
        <taxon>Fungi</taxon>
        <taxon>Dikarya</taxon>
        <taxon>Ascomycota</taxon>
        <taxon>Taphrinomycotina</taxon>
        <taxon>Schizosaccharomycetes</taxon>
        <taxon>Schizosaccharomycetales</taxon>
        <taxon>Schizosaccharomycetaceae</taxon>
        <taxon>Schizosaccharomyces</taxon>
    </lineage>
</organism>
<feature type="signal peptide" evidence="2">
    <location>
        <begin position="1"/>
        <end position="24"/>
    </location>
</feature>
<feature type="chain" id="PRO_0000318589" description="Protein PER1 homolog">
    <location>
        <begin position="25"/>
        <end position="331"/>
    </location>
</feature>
<feature type="topological domain" description="Lumenal" evidence="2">
    <location>
        <begin position="25"/>
        <end position="100"/>
    </location>
</feature>
<feature type="transmembrane region" description="Helical" evidence="2">
    <location>
        <begin position="101"/>
        <end position="121"/>
    </location>
</feature>
<feature type="topological domain" description="Cytoplasmic" evidence="2">
    <location>
        <begin position="122"/>
        <end position="139"/>
    </location>
</feature>
<feature type="transmembrane region" description="Helical" evidence="2">
    <location>
        <begin position="140"/>
        <end position="160"/>
    </location>
</feature>
<feature type="topological domain" description="Lumenal" evidence="2">
    <location>
        <begin position="161"/>
        <end position="168"/>
    </location>
</feature>
<feature type="transmembrane region" description="Helical" evidence="2">
    <location>
        <begin position="169"/>
        <end position="189"/>
    </location>
</feature>
<feature type="topological domain" description="Cytoplasmic" evidence="2">
    <location>
        <begin position="190"/>
        <end position="199"/>
    </location>
</feature>
<feature type="transmembrane region" description="Helical" evidence="2">
    <location>
        <begin position="200"/>
        <end position="220"/>
    </location>
</feature>
<feature type="topological domain" description="Lumenal" evidence="2">
    <location>
        <begin position="221"/>
        <end position="232"/>
    </location>
</feature>
<feature type="transmembrane region" description="Helical" evidence="2">
    <location>
        <begin position="233"/>
        <end position="250"/>
    </location>
</feature>
<feature type="topological domain" description="Cytoplasmic" evidence="2">
    <location>
        <begin position="251"/>
        <end position="263"/>
    </location>
</feature>
<feature type="transmembrane region" description="Helical" evidence="2">
    <location>
        <begin position="264"/>
        <end position="284"/>
    </location>
</feature>
<feature type="topological domain" description="Lumenal" evidence="2">
    <location>
        <begin position="285"/>
        <end position="289"/>
    </location>
</feature>
<feature type="transmembrane region" description="Helical" evidence="2">
    <location>
        <begin position="290"/>
        <end position="310"/>
    </location>
</feature>
<feature type="topological domain" description="Cytoplasmic" evidence="2">
    <location>
        <begin position="311"/>
        <end position="331"/>
    </location>
</feature>